<accession>Q44549</accession>
<accession>Q3MF30</accession>
<organism>
    <name type="scientific">Trichormus variabilis (strain ATCC 29413 / PCC 7937)</name>
    <name type="common">Anabaena variabilis</name>
    <dbReference type="NCBI Taxonomy" id="240292"/>
    <lineage>
        <taxon>Bacteria</taxon>
        <taxon>Bacillati</taxon>
        <taxon>Cyanobacteriota</taxon>
        <taxon>Cyanophyceae</taxon>
        <taxon>Nostocales</taxon>
        <taxon>Nostocaceae</taxon>
        <taxon>Trichormus</taxon>
    </lineage>
</organism>
<gene>
    <name type="primary">petH</name>
    <name type="ordered locus">Ava_0782</name>
</gene>
<comment type="catalytic activity">
    <reaction>
        <text>2 reduced [2Fe-2S]-[ferredoxin] + NADP(+) + H(+) = 2 oxidized [2Fe-2S]-[ferredoxin] + NADPH</text>
        <dbReference type="Rhea" id="RHEA:20125"/>
        <dbReference type="Rhea" id="RHEA-COMP:10000"/>
        <dbReference type="Rhea" id="RHEA-COMP:10001"/>
        <dbReference type="ChEBI" id="CHEBI:15378"/>
        <dbReference type="ChEBI" id="CHEBI:33737"/>
        <dbReference type="ChEBI" id="CHEBI:33738"/>
        <dbReference type="ChEBI" id="CHEBI:57783"/>
        <dbReference type="ChEBI" id="CHEBI:58349"/>
        <dbReference type="EC" id="1.18.1.2"/>
    </reaction>
</comment>
<comment type="cofactor">
    <cofactor>
        <name>FAD</name>
        <dbReference type="ChEBI" id="CHEBI:57692"/>
    </cofactor>
</comment>
<comment type="subcellular location">
    <subcellularLocation>
        <location evidence="1">Cellular thylakoid membrane</location>
        <topology evidence="1">Peripheral membrane protein</topology>
        <orientation evidence="1">Cytoplasmic side</orientation>
    </subcellularLocation>
    <text evidence="1">May be bound to the thylakoid membrane or anchored to the thylakoid-bound phycobilisomes.</text>
</comment>
<comment type="similarity">
    <text evidence="5">Belongs to the ferredoxin--NADP reductase type 1 family.</text>
</comment>
<name>FENR_TRIV2</name>
<protein>
    <recommendedName>
        <fullName>Ferredoxin--NADP reductase</fullName>
        <shortName>FNR</shortName>
        <ecNumber>1.18.1.2</ecNumber>
    </recommendedName>
</protein>
<dbReference type="EC" id="1.18.1.2"/>
<dbReference type="EMBL" id="L26346">
    <property type="protein sequence ID" value="AAA91046.1"/>
    <property type="molecule type" value="Genomic_DNA"/>
</dbReference>
<dbReference type="EMBL" id="CP000117">
    <property type="protein sequence ID" value="ABA20406.1"/>
    <property type="molecule type" value="Genomic_DNA"/>
</dbReference>
<dbReference type="SMR" id="Q44549"/>
<dbReference type="STRING" id="240292.Ava_0782"/>
<dbReference type="KEGG" id="ava:Ava_0782"/>
<dbReference type="eggNOG" id="COG0369">
    <property type="taxonomic scope" value="Bacteria"/>
</dbReference>
<dbReference type="HOGENOM" id="CLU_053066_0_0_3"/>
<dbReference type="BRENDA" id="1.18.1.2">
    <property type="organism ID" value="322"/>
</dbReference>
<dbReference type="Proteomes" id="UP000002533">
    <property type="component" value="Chromosome"/>
</dbReference>
<dbReference type="GO" id="GO:0030089">
    <property type="term" value="C:phycobilisome"/>
    <property type="evidence" value="ECO:0007669"/>
    <property type="project" value="UniProtKB-KW"/>
</dbReference>
<dbReference type="GO" id="GO:0031676">
    <property type="term" value="C:plasma membrane-derived thylakoid membrane"/>
    <property type="evidence" value="ECO:0007669"/>
    <property type="project" value="UniProtKB-SubCell"/>
</dbReference>
<dbReference type="GO" id="GO:0004324">
    <property type="term" value="F:ferredoxin-NADP+ reductase activity"/>
    <property type="evidence" value="ECO:0007669"/>
    <property type="project" value="UniProtKB-EC"/>
</dbReference>
<dbReference type="CDD" id="cd06208">
    <property type="entry name" value="CYPOR_like_FNR"/>
    <property type="match status" value="1"/>
</dbReference>
<dbReference type="FunFam" id="2.40.30.10:FF:000199">
    <property type="entry name" value="Ferredoxin--NADP reductase"/>
    <property type="match status" value="1"/>
</dbReference>
<dbReference type="FunFam" id="3.40.50.80:FF:000008">
    <property type="entry name" value="Ferredoxin--NADP reductase, chloroplastic"/>
    <property type="match status" value="1"/>
</dbReference>
<dbReference type="Gene3D" id="3.40.50.80">
    <property type="entry name" value="Nucleotide-binding domain of ferredoxin-NADP reductase (FNR) module"/>
    <property type="match status" value="1"/>
</dbReference>
<dbReference type="Gene3D" id="2.40.30.10">
    <property type="entry name" value="Translation factors"/>
    <property type="match status" value="1"/>
</dbReference>
<dbReference type="InterPro" id="IPR008213">
    <property type="entry name" value="CpcD-like_dom"/>
</dbReference>
<dbReference type="InterPro" id="IPR017927">
    <property type="entry name" value="FAD-bd_FR_type"/>
</dbReference>
<dbReference type="InterPro" id="IPR001709">
    <property type="entry name" value="Flavoprot_Pyr_Nucl_cyt_Rdtase"/>
</dbReference>
<dbReference type="InterPro" id="IPR015701">
    <property type="entry name" value="FNR"/>
</dbReference>
<dbReference type="InterPro" id="IPR039261">
    <property type="entry name" value="FNR_nucleotide-bd"/>
</dbReference>
<dbReference type="InterPro" id="IPR035442">
    <property type="entry name" value="FNR_plant_Cyanobacteria"/>
</dbReference>
<dbReference type="InterPro" id="IPR001433">
    <property type="entry name" value="OxRdtase_FAD/NAD-bd"/>
</dbReference>
<dbReference type="InterPro" id="IPR017938">
    <property type="entry name" value="Riboflavin_synthase-like_b-brl"/>
</dbReference>
<dbReference type="NCBIfam" id="NF045929">
    <property type="entry name" value="FNRPetHCyano"/>
    <property type="match status" value="1"/>
</dbReference>
<dbReference type="PANTHER" id="PTHR43314">
    <property type="match status" value="1"/>
</dbReference>
<dbReference type="Pfam" id="PF01383">
    <property type="entry name" value="CpcD"/>
    <property type="match status" value="1"/>
</dbReference>
<dbReference type="Pfam" id="PF00175">
    <property type="entry name" value="NAD_binding_1"/>
    <property type="match status" value="1"/>
</dbReference>
<dbReference type="PIRSF" id="PIRSF501178">
    <property type="entry name" value="FNR-PetH"/>
    <property type="match status" value="1"/>
</dbReference>
<dbReference type="PIRSF" id="PIRSF000361">
    <property type="entry name" value="Frd-NADP+_RD"/>
    <property type="match status" value="1"/>
</dbReference>
<dbReference type="PRINTS" id="PR00371">
    <property type="entry name" value="FPNCR"/>
</dbReference>
<dbReference type="SMART" id="SM01094">
    <property type="entry name" value="CpcD"/>
    <property type="match status" value="1"/>
</dbReference>
<dbReference type="SUPFAM" id="SSF52343">
    <property type="entry name" value="Ferredoxin reductase-like, C-terminal NADP-linked domain"/>
    <property type="match status" value="1"/>
</dbReference>
<dbReference type="SUPFAM" id="SSF63380">
    <property type="entry name" value="Riboflavin synthase domain-like"/>
    <property type="match status" value="1"/>
</dbReference>
<dbReference type="PROSITE" id="PS51441">
    <property type="entry name" value="CPCD_LIKE"/>
    <property type="match status" value="1"/>
</dbReference>
<dbReference type="PROSITE" id="PS51384">
    <property type="entry name" value="FAD_FR"/>
    <property type="match status" value="1"/>
</dbReference>
<keyword id="KW-0042">Antenna complex</keyword>
<keyword id="KW-0274">FAD</keyword>
<keyword id="KW-0285">Flavoprotein</keyword>
<keyword id="KW-0472">Membrane</keyword>
<keyword id="KW-0521">NADP</keyword>
<keyword id="KW-0560">Oxidoreductase</keyword>
<keyword id="KW-0605">Phycobilisome</keyword>
<keyword id="KW-0793">Thylakoid</keyword>
<evidence type="ECO:0000250" key="1"/>
<evidence type="ECO:0000255" key="2">
    <source>
        <dbReference type="PROSITE-ProRule" id="PRU00716"/>
    </source>
</evidence>
<evidence type="ECO:0000255" key="3">
    <source>
        <dbReference type="PROSITE-ProRule" id="PRU00771"/>
    </source>
</evidence>
<evidence type="ECO:0000256" key="4">
    <source>
        <dbReference type="SAM" id="MobiDB-lite"/>
    </source>
</evidence>
<evidence type="ECO:0000305" key="5"/>
<sequence>MSNQGAFEGAANVESGSRVFVYEVVGMRQNEETDQTNYPIRKSGSVFIRVPYNRMNQEMQRITRLGGKIVSIQTVSALQQLNGKTTIATVTDASSETAKSEGNGKATPVKTDSGAKGFAKPPAEEQLKKKDNKGNTMTQAKAKHADVPVNLYRPNAPFIGKVISNEPLVKEGGIGIVQHIKFDLTGGNLKYIEGQSIGIIPPGVDKNGKPEKLRLYSIASTRHGDDVDDKTISLCVRQLEYKHPETGETVYGVCSTYLTHIEPGSEVKITGPVGKEMLLPDDPEANVIMLATGTGIAPMRTYLWRMFKDAERAANPEYQFKGFSWLVFGVPTTPNILYKEELEEIQQKYPDNFRLTYAISREQKNPQGGRMYIQDRVAEHADELWQLIKNEKTHTYICGLRGMEEGIDAALSAAAAKEGVTWSDYQKDLKKAGRWHVETY</sequence>
<feature type="chain" id="PRO_0000167634" description="Ferredoxin--NADP reductase">
    <location>
        <begin position="1"/>
        <end position="440"/>
    </location>
</feature>
<feature type="domain" description="CpcD-like" evidence="3">
    <location>
        <begin position="17"/>
        <end position="75"/>
    </location>
</feature>
<feature type="domain" description="FAD-binding FR-type" evidence="2">
    <location>
        <begin position="155"/>
        <end position="279"/>
    </location>
</feature>
<feature type="region of interest" description="Disordered" evidence="4">
    <location>
        <begin position="93"/>
        <end position="142"/>
    </location>
</feature>
<feature type="compositionally biased region" description="Basic and acidic residues" evidence="4">
    <location>
        <begin position="122"/>
        <end position="133"/>
    </location>
</feature>
<feature type="binding site" evidence="1">
    <location>
        <begin position="214"/>
        <end position="217"/>
    </location>
    <ligand>
        <name>FAD</name>
        <dbReference type="ChEBI" id="CHEBI:57692"/>
    </ligand>
</feature>
<feature type="binding site" evidence="1">
    <location>
        <position position="217"/>
    </location>
    <ligand>
        <name>NADP(+)</name>
        <dbReference type="ChEBI" id="CHEBI:58349"/>
    </ligand>
</feature>
<feature type="binding site" evidence="1">
    <location>
        <begin position="235"/>
        <end position="237"/>
    </location>
    <ligand>
        <name>FAD</name>
        <dbReference type="ChEBI" id="CHEBI:57692"/>
    </ligand>
</feature>
<feature type="binding site" evidence="1">
    <location>
        <position position="237"/>
    </location>
    <ligand>
        <name>NADP(+)</name>
        <dbReference type="ChEBI" id="CHEBI:58349"/>
    </ligand>
</feature>
<feature type="binding site" evidence="1">
    <location>
        <position position="241"/>
    </location>
    <ligand>
        <name>FAD</name>
        <dbReference type="ChEBI" id="CHEBI:57692"/>
    </ligand>
</feature>
<feature type="binding site" evidence="1">
    <location>
        <begin position="253"/>
        <end position="255"/>
    </location>
    <ligand>
        <name>FAD</name>
        <dbReference type="ChEBI" id="CHEBI:57692"/>
    </ligand>
</feature>
<feature type="binding site" evidence="1">
    <location>
        <position position="294"/>
    </location>
    <ligand>
        <name>FAD</name>
        <dbReference type="ChEBI" id="CHEBI:57692"/>
    </ligand>
</feature>
<feature type="binding site" evidence="1">
    <location>
        <position position="294"/>
    </location>
    <ligand>
        <name>NADP(+)</name>
        <dbReference type="ChEBI" id="CHEBI:58349"/>
    </ligand>
</feature>
<feature type="binding site" evidence="1">
    <location>
        <begin position="330"/>
        <end position="331"/>
    </location>
    <ligand>
        <name>NADP(+)</name>
        <dbReference type="ChEBI" id="CHEBI:58349"/>
    </ligand>
</feature>
<feature type="binding site" evidence="1">
    <location>
        <begin position="360"/>
        <end position="361"/>
    </location>
    <ligand>
        <name>NADP(+)</name>
        <dbReference type="ChEBI" id="CHEBI:58349"/>
    </ligand>
</feature>
<feature type="binding site" evidence="1">
    <location>
        <begin position="370"/>
        <end position="374"/>
    </location>
    <ligand>
        <name>NADP(+)</name>
        <dbReference type="ChEBI" id="CHEBI:58349"/>
    </ligand>
</feature>
<feature type="binding site" evidence="1">
    <location>
        <begin position="399"/>
        <end position="400"/>
    </location>
    <ligand>
        <name>NADP(+)</name>
        <dbReference type="ChEBI" id="CHEBI:58349"/>
    </ligand>
</feature>
<feature type="binding site" evidence="1">
    <location>
        <position position="438"/>
    </location>
    <ligand>
        <name>NADP(+)</name>
        <dbReference type="ChEBI" id="CHEBI:58349"/>
    </ligand>
</feature>
<reference key="1">
    <citation type="submission" date="1996-03" db="EMBL/GenBank/DDBJ databases">
        <title>Cloning and molecular characterization of the petH gene in the cyanobacterium Anabaena variabilis ATCC 29413.</title>
        <authorList>
            <person name="Mannan R.M."/>
            <person name="Matthijs H.C.P."/>
            <person name="Pakrasi H.B."/>
        </authorList>
    </citation>
    <scope>NUCLEOTIDE SEQUENCE [GENOMIC DNA]</scope>
</reference>
<reference key="2">
    <citation type="journal article" date="2014" name="Stand. Genomic Sci.">
        <title>Complete genome sequence of Anabaena variabilis ATCC 29413.</title>
        <authorList>
            <person name="Thiel T."/>
            <person name="Pratte B.S."/>
            <person name="Zhong J."/>
            <person name="Goodwin L."/>
            <person name="Copeland A."/>
            <person name="Lucas S."/>
            <person name="Han C."/>
            <person name="Pitluck S."/>
            <person name="Land M.L."/>
            <person name="Kyrpides N.C."/>
            <person name="Woyke T."/>
        </authorList>
    </citation>
    <scope>NUCLEOTIDE SEQUENCE [LARGE SCALE GENOMIC DNA]</scope>
    <source>
        <strain>ATCC 29413 / PCC 7937</strain>
    </source>
</reference>
<proteinExistence type="inferred from homology"/>